<protein>
    <recommendedName>
        <fullName evidence="1">Flagellar assembly factor FliW</fullName>
    </recommendedName>
</protein>
<evidence type="ECO:0000255" key="1">
    <source>
        <dbReference type="HAMAP-Rule" id="MF_01185"/>
    </source>
</evidence>
<accession>B2A827</accession>
<name>FLIW_NATTJ</name>
<proteinExistence type="inferred from homology"/>
<feature type="chain" id="PRO_1000164471" description="Flagellar assembly factor FliW">
    <location>
        <begin position="1"/>
        <end position="151"/>
    </location>
</feature>
<keyword id="KW-1005">Bacterial flagellum biogenesis</keyword>
<keyword id="KW-0143">Chaperone</keyword>
<keyword id="KW-0963">Cytoplasm</keyword>
<keyword id="KW-1185">Reference proteome</keyword>
<keyword id="KW-0810">Translation regulation</keyword>
<sequence>MKITSPHFGEIEVNEDKIITFPTGLIGFSDCKRYLLLEGEQGTPFWYLQSVEQEDLFFVMIDPTNFFEDYQIEPSSQDLAAIDLKESENAVILTLVTVPEQDIKSATVNLKGPVIINPDRRLGKQIVLHPSDYTTKHPLFNDQGTKARGAV</sequence>
<comment type="function">
    <text evidence="1">Acts as an anti-CsrA protein, binds CsrA and prevents it from repressing translation of its target genes, one of which is flagellin. Binds to flagellin and participates in the assembly of the flagellum.</text>
</comment>
<comment type="subunit">
    <text evidence="1">Interacts with translational regulator CsrA and flagellin(s).</text>
</comment>
<comment type="subcellular location">
    <subcellularLocation>
        <location evidence="1">Cytoplasm</location>
    </subcellularLocation>
</comment>
<comment type="similarity">
    <text evidence="1">Belongs to the FliW family.</text>
</comment>
<dbReference type="EMBL" id="CP001034">
    <property type="protein sequence ID" value="ACB85799.1"/>
    <property type="molecule type" value="Genomic_DNA"/>
</dbReference>
<dbReference type="RefSeq" id="WP_012448651.1">
    <property type="nucleotide sequence ID" value="NC_010718.1"/>
</dbReference>
<dbReference type="SMR" id="B2A827"/>
<dbReference type="FunCoup" id="B2A827">
    <property type="interactions" value="24"/>
</dbReference>
<dbReference type="STRING" id="457570.Nther_2233"/>
<dbReference type="KEGG" id="nth:Nther_2233"/>
<dbReference type="eggNOG" id="COG1699">
    <property type="taxonomic scope" value="Bacteria"/>
</dbReference>
<dbReference type="HOGENOM" id="CLU_112356_0_2_9"/>
<dbReference type="InParanoid" id="B2A827"/>
<dbReference type="OrthoDB" id="9801235at2"/>
<dbReference type="Proteomes" id="UP000001683">
    <property type="component" value="Chromosome"/>
</dbReference>
<dbReference type="GO" id="GO:0005737">
    <property type="term" value="C:cytoplasm"/>
    <property type="evidence" value="ECO:0007669"/>
    <property type="project" value="UniProtKB-SubCell"/>
</dbReference>
<dbReference type="GO" id="GO:0044780">
    <property type="term" value="P:bacterial-type flagellum assembly"/>
    <property type="evidence" value="ECO:0007669"/>
    <property type="project" value="UniProtKB-UniRule"/>
</dbReference>
<dbReference type="GO" id="GO:0006417">
    <property type="term" value="P:regulation of translation"/>
    <property type="evidence" value="ECO:0007669"/>
    <property type="project" value="UniProtKB-KW"/>
</dbReference>
<dbReference type="Gene3D" id="2.30.290.10">
    <property type="entry name" value="BH3618-like"/>
    <property type="match status" value="1"/>
</dbReference>
<dbReference type="HAMAP" id="MF_01185">
    <property type="entry name" value="FliW"/>
    <property type="match status" value="1"/>
</dbReference>
<dbReference type="InterPro" id="IPR003775">
    <property type="entry name" value="Flagellar_assembly_factor_FliW"/>
</dbReference>
<dbReference type="InterPro" id="IPR024046">
    <property type="entry name" value="Flagellar_assmbl_FliW_dom_sf"/>
</dbReference>
<dbReference type="NCBIfam" id="NF009793">
    <property type="entry name" value="PRK13285.1-1"/>
    <property type="match status" value="1"/>
</dbReference>
<dbReference type="NCBIfam" id="NF009801">
    <property type="entry name" value="PRK13285.2-4"/>
    <property type="match status" value="1"/>
</dbReference>
<dbReference type="PANTHER" id="PTHR39190">
    <property type="entry name" value="FLAGELLAR ASSEMBLY FACTOR FLIW"/>
    <property type="match status" value="1"/>
</dbReference>
<dbReference type="PANTHER" id="PTHR39190:SF1">
    <property type="entry name" value="FLAGELLAR ASSEMBLY FACTOR FLIW"/>
    <property type="match status" value="1"/>
</dbReference>
<dbReference type="Pfam" id="PF02623">
    <property type="entry name" value="FliW"/>
    <property type="match status" value="1"/>
</dbReference>
<dbReference type="SUPFAM" id="SSF141457">
    <property type="entry name" value="BH3618-like"/>
    <property type="match status" value="1"/>
</dbReference>
<gene>
    <name evidence="1" type="primary">fliW</name>
    <name type="ordered locus">Nther_2233</name>
</gene>
<organism>
    <name type="scientific">Natranaerobius thermophilus (strain ATCC BAA-1301 / DSM 18059 / JW/NM-WN-LF)</name>
    <dbReference type="NCBI Taxonomy" id="457570"/>
    <lineage>
        <taxon>Bacteria</taxon>
        <taxon>Bacillati</taxon>
        <taxon>Bacillota</taxon>
        <taxon>Clostridia</taxon>
        <taxon>Natranaerobiales</taxon>
        <taxon>Natranaerobiaceae</taxon>
        <taxon>Natranaerobius</taxon>
    </lineage>
</organism>
<reference key="1">
    <citation type="submission" date="2008-04" db="EMBL/GenBank/DDBJ databases">
        <title>Complete sequence of chromosome of Natranaerobius thermophilus JW/NM-WN-LF.</title>
        <authorList>
            <consortium name="US DOE Joint Genome Institute"/>
            <person name="Copeland A."/>
            <person name="Lucas S."/>
            <person name="Lapidus A."/>
            <person name="Glavina del Rio T."/>
            <person name="Dalin E."/>
            <person name="Tice H."/>
            <person name="Bruce D."/>
            <person name="Goodwin L."/>
            <person name="Pitluck S."/>
            <person name="Chertkov O."/>
            <person name="Brettin T."/>
            <person name="Detter J.C."/>
            <person name="Han C."/>
            <person name="Kuske C.R."/>
            <person name="Schmutz J."/>
            <person name="Larimer F."/>
            <person name="Land M."/>
            <person name="Hauser L."/>
            <person name="Kyrpides N."/>
            <person name="Lykidis A."/>
            <person name="Mesbah N.M."/>
            <person name="Wiegel J."/>
        </authorList>
    </citation>
    <scope>NUCLEOTIDE SEQUENCE [LARGE SCALE GENOMIC DNA]</scope>
    <source>
        <strain>ATCC BAA-1301 / DSM 18059 / JW/NM-WN-LF</strain>
    </source>
</reference>